<dbReference type="EC" id="6.1.1.12" evidence="1"/>
<dbReference type="EMBL" id="L43967">
    <property type="protein sequence ID" value="AAC71252.1"/>
    <property type="molecule type" value="Genomic_DNA"/>
</dbReference>
<dbReference type="EMBL" id="U01814">
    <property type="protein sequence ID" value="AAD12351.1"/>
    <property type="molecule type" value="Genomic_DNA"/>
</dbReference>
<dbReference type="EMBL" id="X61523">
    <property type="protein sequence ID" value="CAA43736.1"/>
    <property type="molecule type" value="Genomic_DNA"/>
</dbReference>
<dbReference type="PIR" id="I64203">
    <property type="entry name" value="I64203"/>
</dbReference>
<dbReference type="SMR" id="P47282"/>
<dbReference type="FunCoup" id="P47282">
    <property type="interactions" value="206"/>
</dbReference>
<dbReference type="STRING" id="243273.MG_036"/>
<dbReference type="KEGG" id="mge:MG_036"/>
<dbReference type="eggNOG" id="COG0173">
    <property type="taxonomic scope" value="Bacteria"/>
</dbReference>
<dbReference type="HOGENOM" id="CLU_014330_3_2_14"/>
<dbReference type="InParanoid" id="P47282"/>
<dbReference type="Proteomes" id="UP000000807">
    <property type="component" value="Chromosome"/>
</dbReference>
<dbReference type="GO" id="GO:0005737">
    <property type="term" value="C:cytoplasm"/>
    <property type="evidence" value="ECO:0007669"/>
    <property type="project" value="UniProtKB-SubCell"/>
</dbReference>
<dbReference type="GO" id="GO:0004815">
    <property type="term" value="F:aspartate-tRNA ligase activity"/>
    <property type="evidence" value="ECO:0000318"/>
    <property type="project" value="GO_Central"/>
</dbReference>
<dbReference type="GO" id="GO:0005524">
    <property type="term" value="F:ATP binding"/>
    <property type="evidence" value="ECO:0007669"/>
    <property type="project" value="UniProtKB-UniRule"/>
</dbReference>
<dbReference type="GO" id="GO:0003676">
    <property type="term" value="F:nucleic acid binding"/>
    <property type="evidence" value="ECO:0007669"/>
    <property type="project" value="InterPro"/>
</dbReference>
<dbReference type="GO" id="GO:0006422">
    <property type="term" value="P:aspartyl-tRNA aminoacylation"/>
    <property type="evidence" value="ECO:0000318"/>
    <property type="project" value="GO_Central"/>
</dbReference>
<dbReference type="CDD" id="cd00777">
    <property type="entry name" value="AspRS_core"/>
    <property type="match status" value="1"/>
</dbReference>
<dbReference type="Gene3D" id="3.30.930.10">
    <property type="entry name" value="Bira Bifunctional Protein, Domain 2"/>
    <property type="match status" value="1"/>
</dbReference>
<dbReference type="Gene3D" id="3.30.1360.30">
    <property type="entry name" value="GAD-like domain"/>
    <property type="match status" value="1"/>
</dbReference>
<dbReference type="Gene3D" id="2.40.50.140">
    <property type="entry name" value="Nucleic acid-binding proteins"/>
    <property type="match status" value="1"/>
</dbReference>
<dbReference type="HAMAP" id="MF_00044">
    <property type="entry name" value="Asp_tRNA_synth_type1"/>
    <property type="match status" value="1"/>
</dbReference>
<dbReference type="InterPro" id="IPR004364">
    <property type="entry name" value="Aa-tRNA-synt_II"/>
</dbReference>
<dbReference type="InterPro" id="IPR006195">
    <property type="entry name" value="aa-tRNA-synth_II"/>
</dbReference>
<dbReference type="InterPro" id="IPR045864">
    <property type="entry name" value="aa-tRNA-synth_II/BPL/LPL"/>
</dbReference>
<dbReference type="InterPro" id="IPR004524">
    <property type="entry name" value="Asp-tRNA-ligase_1"/>
</dbReference>
<dbReference type="InterPro" id="IPR002312">
    <property type="entry name" value="Asp/Asn-tRNA-synth_IIb"/>
</dbReference>
<dbReference type="InterPro" id="IPR047090">
    <property type="entry name" value="AspRS_core"/>
</dbReference>
<dbReference type="InterPro" id="IPR004115">
    <property type="entry name" value="GAD-like_sf"/>
</dbReference>
<dbReference type="InterPro" id="IPR012340">
    <property type="entry name" value="NA-bd_OB-fold"/>
</dbReference>
<dbReference type="InterPro" id="IPR004365">
    <property type="entry name" value="NA-bd_OB_tRNA"/>
</dbReference>
<dbReference type="NCBIfam" id="TIGR00459">
    <property type="entry name" value="aspS_bact"/>
    <property type="match status" value="1"/>
</dbReference>
<dbReference type="NCBIfam" id="NF001750">
    <property type="entry name" value="PRK00476.1"/>
    <property type="match status" value="1"/>
</dbReference>
<dbReference type="PANTHER" id="PTHR22594:SF5">
    <property type="entry name" value="ASPARTATE--TRNA LIGASE, MITOCHONDRIAL"/>
    <property type="match status" value="1"/>
</dbReference>
<dbReference type="PANTHER" id="PTHR22594">
    <property type="entry name" value="ASPARTYL/LYSYL-TRNA SYNTHETASE"/>
    <property type="match status" value="1"/>
</dbReference>
<dbReference type="Pfam" id="PF00152">
    <property type="entry name" value="tRNA-synt_2"/>
    <property type="match status" value="1"/>
</dbReference>
<dbReference type="Pfam" id="PF01336">
    <property type="entry name" value="tRNA_anti-codon"/>
    <property type="match status" value="1"/>
</dbReference>
<dbReference type="PRINTS" id="PR01042">
    <property type="entry name" value="TRNASYNTHASP"/>
</dbReference>
<dbReference type="SUPFAM" id="SSF55681">
    <property type="entry name" value="Class II aaRS and biotin synthetases"/>
    <property type="match status" value="1"/>
</dbReference>
<dbReference type="SUPFAM" id="SSF55261">
    <property type="entry name" value="GAD domain-like"/>
    <property type="match status" value="1"/>
</dbReference>
<dbReference type="SUPFAM" id="SSF50249">
    <property type="entry name" value="Nucleic acid-binding proteins"/>
    <property type="match status" value="1"/>
</dbReference>
<dbReference type="PROSITE" id="PS50862">
    <property type="entry name" value="AA_TRNA_LIGASE_II"/>
    <property type="match status" value="1"/>
</dbReference>
<keyword id="KW-0030">Aminoacyl-tRNA synthetase</keyword>
<keyword id="KW-0067">ATP-binding</keyword>
<keyword id="KW-0963">Cytoplasm</keyword>
<keyword id="KW-0436">Ligase</keyword>
<keyword id="KW-0547">Nucleotide-binding</keyword>
<keyword id="KW-0648">Protein biosynthesis</keyword>
<keyword id="KW-1185">Reference proteome</keyword>
<accession>P47282</accession>
<accession>Q49462</accession>
<accession>Q49479</accession>
<evidence type="ECO:0000255" key="1">
    <source>
        <dbReference type="HAMAP-Rule" id="MF_00044"/>
    </source>
</evidence>
<evidence type="ECO:0000305" key="2"/>
<comment type="function">
    <text evidence="1">Catalyzes the attachment of L-aspartate to tRNA(Asp) in a two-step reaction: L-aspartate is first activated by ATP to form Asp-AMP and then transferred to the acceptor end of tRNA(Asp).</text>
</comment>
<comment type="catalytic activity">
    <reaction evidence="1">
        <text>tRNA(Asp) + L-aspartate + ATP = L-aspartyl-tRNA(Asp) + AMP + diphosphate</text>
        <dbReference type="Rhea" id="RHEA:19649"/>
        <dbReference type="Rhea" id="RHEA-COMP:9660"/>
        <dbReference type="Rhea" id="RHEA-COMP:9678"/>
        <dbReference type="ChEBI" id="CHEBI:29991"/>
        <dbReference type="ChEBI" id="CHEBI:30616"/>
        <dbReference type="ChEBI" id="CHEBI:33019"/>
        <dbReference type="ChEBI" id="CHEBI:78442"/>
        <dbReference type="ChEBI" id="CHEBI:78516"/>
        <dbReference type="ChEBI" id="CHEBI:456215"/>
        <dbReference type="EC" id="6.1.1.12"/>
    </reaction>
</comment>
<comment type="subunit">
    <text evidence="1">Homodimer.</text>
</comment>
<comment type="subcellular location">
    <subcellularLocation>
        <location evidence="1">Cytoplasm</location>
    </subcellularLocation>
</comment>
<comment type="similarity">
    <text evidence="1">Belongs to the class-II aminoacyl-tRNA synthetase family. Type 1 subfamily.</text>
</comment>
<reference key="1">
    <citation type="journal article" date="1995" name="Science">
        <title>The minimal gene complement of Mycoplasma genitalium.</title>
        <authorList>
            <person name="Fraser C.M."/>
            <person name="Gocayne J.D."/>
            <person name="White O."/>
            <person name="Adams M.D."/>
            <person name="Clayton R.A."/>
            <person name="Fleischmann R.D."/>
            <person name="Bult C.J."/>
            <person name="Kerlavage A.R."/>
            <person name="Sutton G.G."/>
            <person name="Kelley J.M."/>
            <person name="Fritchman J.L."/>
            <person name="Weidman J.F."/>
            <person name="Small K.V."/>
            <person name="Sandusky M."/>
            <person name="Fuhrmann J.L."/>
            <person name="Nguyen D.T."/>
            <person name="Utterback T.R."/>
            <person name="Saudek D.M."/>
            <person name="Phillips C.A."/>
            <person name="Merrick J.M."/>
            <person name="Tomb J.-F."/>
            <person name="Dougherty B.A."/>
            <person name="Bott K.F."/>
            <person name="Hu P.-C."/>
            <person name="Lucier T.S."/>
            <person name="Peterson S.N."/>
            <person name="Smith H.O."/>
            <person name="Hutchison C.A. III"/>
            <person name="Venter J.C."/>
        </authorList>
    </citation>
    <scope>NUCLEOTIDE SEQUENCE [LARGE SCALE GENOMIC DNA]</scope>
    <source>
        <strain>ATCC 33530 / DSM 19775 / NCTC 10195 / G37</strain>
    </source>
</reference>
<reference key="2">
    <citation type="journal article" date="1993" name="J. Bacteriol.">
        <title>A survey of the Mycoplasma genitalium genome by using random sequencing.</title>
        <authorList>
            <person name="Peterson S.N."/>
            <person name="Hu P.-C."/>
            <person name="Bott K.F."/>
            <person name="Hutchison C.A. III"/>
        </authorList>
    </citation>
    <scope>NUCLEOTIDE SEQUENCE [GENOMIC DNA] OF 374-550</scope>
    <source>
        <strain>ATCC 33530 / DSM 19775 / NCTC 10195 / G37</strain>
    </source>
</reference>
<reference key="3">
    <citation type="journal article" date="1991" name="Nucleic Acids Res.">
        <title>A random sequencing approach for placing markers on the physical map of Mycoplasma genitalium.</title>
        <authorList>
            <person name="Peterson S.N."/>
            <person name="Schramm N."/>
            <person name="Hu P.-C."/>
            <person name="Bott K.F."/>
            <person name="Hutchison C.A. III"/>
        </authorList>
    </citation>
    <scope>NUCLEOTIDE SEQUENCE [GENOMIC DNA] OF 388-470</scope>
    <source>
        <strain>ATCC 33530 / DSM 19775 / NCTC 10195 / G37</strain>
    </source>
</reference>
<protein>
    <recommendedName>
        <fullName evidence="1">Aspartate--tRNA ligase</fullName>
        <ecNumber evidence="1">6.1.1.12</ecNumber>
    </recommendedName>
    <alternativeName>
        <fullName evidence="1">Aspartyl-tRNA synthetase</fullName>
        <shortName evidence="1">AspRS</shortName>
    </alternativeName>
</protein>
<organism>
    <name type="scientific">Mycoplasma genitalium (strain ATCC 33530 / DSM 19775 / NCTC 10195 / G37)</name>
    <name type="common">Mycoplasmoides genitalium</name>
    <dbReference type="NCBI Taxonomy" id="243273"/>
    <lineage>
        <taxon>Bacteria</taxon>
        <taxon>Bacillati</taxon>
        <taxon>Mycoplasmatota</taxon>
        <taxon>Mycoplasmoidales</taxon>
        <taxon>Mycoplasmoidaceae</taxon>
        <taxon>Mycoplasmoides</taxon>
    </lineage>
</organism>
<feature type="chain" id="PRO_0000110902" description="Aspartate--tRNA ligase">
    <location>
        <begin position="1"/>
        <end position="550"/>
    </location>
</feature>
<feature type="region of interest" description="Aspartate" evidence="1">
    <location>
        <begin position="186"/>
        <end position="189"/>
    </location>
</feature>
<feature type="binding site" evidence="1">
    <location>
        <position position="162"/>
    </location>
    <ligand>
        <name>L-aspartate</name>
        <dbReference type="ChEBI" id="CHEBI:29991"/>
    </ligand>
</feature>
<feature type="binding site" evidence="1">
    <location>
        <begin position="208"/>
        <end position="210"/>
    </location>
    <ligand>
        <name>ATP</name>
        <dbReference type="ChEBI" id="CHEBI:30616"/>
    </ligand>
</feature>
<feature type="binding site" evidence="1">
    <location>
        <position position="208"/>
    </location>
    <ligand>
        <name>L-aspartate</name>
        <dbReference type="ChEBI" id="CHEBI:29991"/>
    </ligand>
</feature>
<feature type="binding site" evidence="1">
    <location>
        <position position="217"/>
    </location>
    <ligand>
        <name>ATP</name>
        <dbReference type="ChEBI" id="CHEBI:30616"/>
    </ligand>
</feature>
<feature type="binding site" evidence="1">
    <location>
        <position position="417"/>
    </location>
    <ligand>
        <name>L-aspartate</name>
        <dbReference type="ChEBI" id="CHEBI:29991"/>
    </ligand>
</feature>
<feature type="binding site" evidence="1">
    <location>
        <position position="451"/>
    </location>
    <ligand>
        <name>ATP</name>
        <dbReference type="ChEBI" id="CHEBI:30616"/>
    </ligand>
</feature>
<feature type="binding site" evidence="1">
    <location>
        <position position="458"/>
    </location>
    <ligand>
        <name>L-aspartate</name>
        <dbReference type="ChEBI" id="CHEBI:29991"/>
    </ligand>
</feature>
<feature type="binding site" evidence="1">
    <location>
        <begin position="499"/>
        <end position="502"/>
    </location>
    <ligand>
        <name>ATP</name>
        <dbReference type="ChEBI" id="CHEBI:30616"/>
    </ligand>
</feature>
<feature type="sequence conflict" description="In Ref. 2; AAD12351." evidence="2" ref="2">
    <original>LGAI</original>
    <variation>CWSN</variation>
    <location>
        <begin position="374"/>
        <end position="377"/>
    </location>
</feature>
<feature type="sequence conflict" description="In Ref. 3; CAA43736." evidence="2" ref="3">
    <original>MN</original>
    <variation>II</variation>
    <location>
        <begin position="469"/>
        <end position="470"/>
    </location>
</feature>
<name>SYD_MYCGE</name>
<proteinExistence type="inferred from homology"/>
<gene>
    <name evidence="1" type="primary">aspS</name>
    <name type="ordered locus">MG036</name>
</gene>
<sequence>MCFNQRILIGSISTEQLNKTIVIIGWIKRIKKLGEINFIIVGDKSGTIQVTCKDKEQIQQLTREDIVIVKAKLQRLDSVRFELINPTIKLFSKSKTPPLIIEDETDALEEVRLKYRYLDLRRRLMQKRLLLRHQFILAIRNWFNQQGFIEIETPTLSKSTPEGAQDFLVPARIRKDCFYALVQSPQIYKQLLMIAGVEKYFQIARVYRDEDSRKDRQPEHTQIDFEISFCNQKMIMNLVEKLFFSVFLDVFQIKIKKTFPVFKFSELFERFGSDKPDLRYGFEIKDFTSLFQDHQNQFTKLIEAKGIIGGIELTNIELSTDKIKALRKIAKDHDVSLEVHNKNNSTLKTSIKCDEKNTLLLVANKSKKKAWTALGAIRNELKYHLDIVKPNQYSFCWVVDFPLYDFDEKTNQWISNHNIFSKPKQEWIDNFESNKNEALSEQFDLVLNGFEIGSGSIRINDPIVQKRLMNSLNIDPNKFAFLLEAYQYGAPVHGGMGLGIDRLMMILNQTDNIREVIAFPKNNHGIEVHTNAPDKIDKEEVKWWIKELVK</sequence>